<name>BORC8_MOUSE</name>
<proteinExistence type="evidence at protein level"/>
<sequence length="120" mass="13565">MEEPEMQLKGKKVTDKFTESVYVLANEPSVALYRLQEHVRRSLPELAQHKADMQRWEEQSQGAIYTVEYACSAVKSLVDSSVYFRSVEGLLKQAISIRDHMNTSAQGHSQEKLSPPPSLA</sequence>
<accession>Q9D6Y4</accession>
<dbReference type="EMBL" id="AK009829">
    <property type="protein sequence ID" value="BAB26528.1"/>
    <property type="molecule type" value="mRNA"/>
</dbReference>
<dbReference type="CCDS" id="CCDS52568.1"/>
<dbReference type="RefSeq" id="NP_001139024.1">
    <property type="nucleotide sequence ID" value="NM_001145552.2"/>
</dbReference>
<dbReference type="RefSeq" id="NP_001296770.1">
    <property type="nucleotide sequence ID" value="NM_001309841.1"/>
</dbReference>
<dbReference type="SMR" id="Q9D6Y4"/>
<dbReference type="ComplexPortal" id="CPX-5061">
    <property type="entry name" value="BORC complex"/>
</dbReference>
<dbReference type="FunCoup" id="Q9D6Y4">
    <property type="interactions" value="263"/>
</dbReference>
<dbReference type="STRING" id="10090.ENSMUSP00000002418"/>
<dbReference type="iPTMnet" id="Q9D6Y4"/>
<dbReference type="PhosphoSitePlus" id="Q9D6Y4"/>
<dbReference type="PaxDb" id="10090-ENSMUSP00000002418"/>
<dbReference type="ProteomicsDB" id="273698"/>
<dbReference type="Pumba" id="Q9D6Y4"/>
<dbReference type="Antibodypedia" id="47987">
    <property type="antibodies" value="94 antibodies from 14 providers"/>
</dbReference>
<dbReference type="Ensembl" id="ENSMUST00000002418.15">
    <property type="protein sequence ID" value="ENSMUSP00000002418.9"/>
    <property type="gene ID" value="ENSMUSG00000002345.19"/>
</dbReference>
<dbReference type="GeneID" id="72368"/>
<dbReference type="KEGG" id="mmu:72368"/>
<dbReference type="UCSC" id="uc009lyy.1">
    <property type="organism name" value="mouse"/>
</dbReference>
<dbReference type="AGR" id="MGI:1919618"/>
<dbReference type="CTD" id="729991"/>
<dbReference type="MGI" id="MGI:1919618">
    <property type="gene designation" value="Borcs8"/>
</dbReference>
<dbReference type="VEuPathDB" id="HostDB:ENSMUSG00000002345"/>
<dbReference type="eggNOG" id="KOG4523">
    <property type="taxonomic scope" value="Eukaryota"/>
</dbReference>
<dbReference type="GeneTree" id="ENSGT00390000014856"/>
<dbReference type="HOGENOM" id="CLU_151479_0_0_1"/>
<dbReference type="InParanoid" id="Q9D6Y4"/>
<dbReference type="OMA" id="INIRDHM"/>
<dbReference type="OrthoDB" id="10044187at2759"/>
<dbReference type="TreeFam" id="TF313931"/>
<dbReference type="BioGRID-ORCS" id="72368">
    <property type="hits" value="2 hits in 28 CRISPR screens"/>
</dbReference>
<dbReference type="PRO" id="PR:Q9D6Y4"/>
<dbReference type="Proteomes" id="UP000000589">
    <property type="component" value="Chromosome 8"/>
</dbReference>
<dbReference type="RNAct" id="Q9D6Y4">
    <property type="molecule type" value="protein"/>
</dbReference>
<dbReference type="Bgee" id="ENSMUSG00000002345">
    <property type="expression patterns" value="Expressed in lip and 193 other cell types or tissues"/>
</dbReference>
<dbReference type="ExpressionAtlas" id="Q9D6Y4">
    <property type="expression patterns" value="baseline and differential"/>
</dbReference>
<dbReference type="GO" id="GO:0099078">
    <property type="term" value="C:BORC complex"/>
    <property type="evidence" value="ECO:0000250"/>
    <property type="project" value="UniProtKB"/>
</dbReference>
<dbReference type="GO" id="GO:0098574">
    <property type="term" value="C:cytoplasmic side of lysosomal membrane"/>
    <property type="evidence" value="ECO:0000303"/>
    <property type="project" value="ComplexPortal"/>
</dbReference>
<dbReference type="GO" id="GO:0007507">
    <property type="term" value="P:heart development"/>
    <property type="evidence" value="ECO:0007669"/>
    <property type="project" value="Ensembl"/>
</dbReference>
<dbReference type="GO" id="GO:0032418">
    <property type="term" value="P:lysosome localization"/>
    <property type="evidence" value="ECO:0000303"/>
    <property type="project" value="ComplexPortal"/>
</dbReference>
<dbReference type="GO" id="GO:0072384">
    <property type="term" value="P:organelle transport along microtubule"/>
    <property type="evidence" value="ECO:0000303"/>
    <property type="project" value="ComplexPortal"/>
</dbReference>
<dbReference type="GO" id="GO:0051036">
    <property type="term" value="P:regulation of endosome size"/>
    <property type="evidence" value="ECO:0000303"/>
    <property type="project" value="ComplexPortal"/>
</dbReference>
<dbReference type="GO" id="GO:0062196">
    <property type="term" value="P:regulation of lysosome size"/>
    <property type="evidence" value="ECO:0000303"/>
    <property type="project" value="ComplexPortal"/>
</dbReference>
<dbReference type="InterPro" id="IPR019320">
    <property type="entry name" value="BORCS8"/>
</dbReference>
<dbReference type="PANTHER" id="PTHR21146:SF0">
    <property type="entry name" value="BLOC-1-RELATED COMPLEX SUBUNIT 8"/>
    <property type="match status" value="1"/>
</dbReference>
<dbReference type="PANTHER" id="PTHR21146">
    <property type="entry name" value="MEF2B PROTEIN"/>
    <property type="match status" value="1"/>
</dbReference>
<dbReference type="Pfam" id="PF10167">
    <property type="entry name" value="BORCS8"/>
    <property type="match status" value="1"/>
</dbReference>
<protein>
    <recommendedName>
        <fullName evidence="3">BLOC-1-related complex subunit 8</fullName>
    </recommendedName>
</protein>
<reference key="1">
    <citation type="journal article" date="2005" name="Science">
        <title>The transcriptional landscape of the mammalian genome.</title>
        <authorList>
            <person name="Carninci P."/>
            <person name="Kasukawa T."/>
            <person name="Katayama S."/>
            <person name="Gough J."/>
            <person name="Frith M.C."/>
            <person name="Maeda N."/>
            <person name="Oyama R."/>
            <person name="Ravasi T."/>
            <person name="Lenhard B."/>
            <person name="Wells C."/>
            <person name="Kodzius R."/>
            <person name="Shimokawa K."/>
            <person name="Bajic V.B."/>
            <person name="Brenner S.E."/>
            <person name="Batalov S."/>
            <person name="Forrest A.R."/>
            <person name="Zavolan M."/>
            <person name="Davis M.J."/>
            <person name="Wilming L.G."/>
            <person name="Aidinis V."/>
            <person name="Allen J.E."/>
            <person name="Ambesi-Impiombato A."/>
            <person name="Apweiler R."/>
            <person name="Aturaliya R.N."/>
            <person name="Bailey T.L."/>
            <person name="Bansal M."/>
            <person name="Baxter L."/>
            <person name="Beisel K.W."/>
            <person name="Bersano T."/>
            <person name="Bono H."/>
            <person name="Chalk A.M."/>
            <person name="Chiu K.P."/>
            <person name="Choudhary V."/>
            <person name="Christoffels A."/>
            <person name="Clutterbuck D.R."/>
            <person name="Crowe M.L."/>
            <person name="Dalla E."/>
            <person name="Dalrymple B.P."/>
            <person name="de Bono B."/>
            <person name="Della Gatta G."/>
            <person name="di Bernardo D."/>
            <person name="Down T."/>
            <person name="Engstrom P."/>
            <person name="Fagiolini M."/>
            <person name="Faulkner G."/>
            <person name="Fletcher C.F."/>
            <person name="Fukushima T."/>
            <person name="Furuno M."/>
            <person name="Futaki S."/>
            <person name="Gariboldi M."/>
            <person name="Georgii-Hemming P."/>
            <person name="Gingeras T.R."/>
            <person name="Gojobori T."/>
            <person name="Green R.E."/>
            <person name="Gustincich S."/>
            <person name="Harbers M."/>
            <person name="Hayashi Y."/>
            <person name="Hensch T.K."/>
            <person name="Hirokawa N."/>
            <person name="Hill D."/>
            <person name="Huminiecki L."/>
            <person name="Iacono M."/>
            <person name="Ikeo K."/>
            <person name="Iwama A."/>
            <person name="Ishikawa T."/>
            <person name="Jakt M."/>
            <person name="Kanapin A."/>
            <person name="Katoh M."/>
            <person name="Kawasawa Y."/>
            <person name="Kelso J."/>
            <person name="Kitamura H."/>
            <person name="Kitano H."/>
            <person name="Kollias G."/>
            <person name="Krishnan S.P."/>
            <person name="Kruger A."/>
            <person name="Kummerfeld S.K."/>
            <person name="Kurochkin I.V."/>
            <person name="Lareau L.F."/>
            <person name="Lazarevic D."/>
            <person name="Lipovich L."/>
            <person name="Liu J."/>
            <person name="Liuni S."/>
            <person name="McWilliam S."/>
            <person name="Madan Babu M."/>
            <person name="Madera M."/>
            <person name="Marchionni L."/>
            <person name="Matsuda H."/>
            <person name="Matsuzawa S."/>
            <person name="Miki H."/>
            <person name="Mignone F."/>
            <person name="Miyake S."/>
            <person name="Morris K."/>
            <person name="Mottagui-Tabar S."/>
            <person name="Mulder N."/>
            <person name="Nakano N."/>
            <person name="Nakauchi H."/>
            <person name="Ng P."/>
            <person name="Nilsson R."/>
            <person name="Nishiguchi S."/>
            <person name="Nishikawa S."/>
            <person name="Nori F."/>
            <person name="Ohara O."/>
            <person name="Okazaki Y."/>
            <person name="Orlando V."/>
            <person name="Pang K.C."/>
            <person name="Pavan W.J."/>
            <person name="Pavesi G."/>
            <person name="Pesole G."/>
            <person name="Petrovsky N."/>
            <person name="Piazza S."/>
            <person name="Reed J."/>
            <person name="Reid J.F."/>
            <person name="Ring B.Z."/>
            <person name="Ringwald M."/>
            <person name="Rost B."/>
            <person name="Ruan Y."/>
            <person name="Salzberg S.L."/>
            <person name="Sandelin A."/>
            <person name="Schneider C."/>
            <person name="Schoenbach C."/>
            <person name="Sekiguchi K."/>
            <person name="Semple C.A."/>
            <person name="Seno S."/>
            <person name="Sessa L."/>
            <person name="Sheng Y."/>
            <person name="Shibata Y."/>
            <person name="Shimada H."/>
            <person name="Shimada K."/>
            <person name="Silva D."/>
            <person name="Sinclair B."/>
            <person name="Sperling S."/>
            <person name="Stupka E."/>
            <person name="Sugiura K."/>
            <person name="Sultana R."/>
            <person name="Takenaka Y."/>
            <person name="Taki K."/>
            <person name="Tammoja K."/>
            <person name="Tan S.L."/>
            <person name="Tang S."/>
            <person name="Taylor M.S."/>
            <person name="Tegner J."/>
            <person name="Teichmann S.A."/>
            <person name="Ueda H.R."/>
            <person name="van Nimwegen E."/>
            <person name="Verardo R."/>
            <person name="Wei C.L."/>
            <person name="Yagi K."/>
            <person name="Yamanishi H."/>
            <person name="Zabarovsky E."/>
            <person name="Zhu S."/>
            <person name="Zimmer A."/>
            <person name="Hide W."/>
            <person name="Bult C."/>
            <person name="Grimmond S.M."/>
            <person name="Teasdale R.D."/>
            <person name="Liu E.T."/>
            <person name="Brusic V."/>
            <person name="Quackenbush J."/>
            <person name="Wahlestedt C."/>
            <person name="Mattick J.S."/>
            <person name="Hume D.A."/>
            <person name="Kai C."/>
            <person name="Sasaki D."/>
            <person name="Tomaru Y."/>
            <person name="Fukuda S."/>
            <person name="Kanamori-Katayama M."/>
            <person name="Suzuki M."/>
            <person name="Aoki J."/>
            <person name="Arakawa T."/>
            <person name="Iida J."/>
            <person name="Imamura K."/>
            <person name="Itoh M."/>
            <person name="Kato T."/>
            <person name="Kawaji H."/>
            <person name="Kawagashira N."/>
            <person name="Kawashima T."/>
            <person name="Kojima M."/>
            <person name="Kondo S."/>
            <person name="Konno H."/>
            <person name="Nakano K."/>
            <person name="Ninomiya N."/>
            <person name="Nishio T."/>
            <person name="Okada M."/>
            <person name="Plessy C."/>
            <person name="Shibata K."/>
            <person name="Shiraki T."/>
            <person name="Suzuki S."/>
            <person name="Tagami M."/>
            <person name="Waki K."/>
            <person name="Watahiki A."/>
            <person name="Okamura-Oho Y."/>
            <person name="Suzuki H."/>
            <person name="Kawai J."/>
            <person name="Hayashizaki Y."/>
        </authorList>
    </citation>
    <scope>NUCLEOTIDE SEQUENCE [LARGE SCALE MRNA]</scope>
    <source>
        <strain>C57BL/6J</strain>
        <tissue>Tongue</tissue>
    </source>
</reference>
<reference key="2">
    <citation type="journal article" date="2010" name="Cell">
        <title>A tissue-specific atlas of mouse protein phosphorylation and expression.</title>
        <authorList>
            <person name="Huttlin E.L."/>
            <person name="Jedrychowski M.P."/>
            <person name="Elias J.E."/>
            <person name="Goswami T."/>
            <person name="Rad R."/>
            <person name="Beausoleil S.A."/>
            <person name="Villen J."/>
            <person name="Haas W."/>
            <person name="Sowa M.E."/>
            <person name="Gygi S.P."/>
        </authorList>
    </citation>
    <scope>IDENTIFICATION BY MASS SPECTROMETRY [LARGE SCALE ANALYSIS]</scope>
    <source>
        <tissue>Testis</tissue>
    </source>
</reference>
<evidence type="ECO:0000250" key="1">
    <source>
        <dbReference type="UniProtKB" id="Q96FH0"/>
    </source>
</evidence>
<evidence type="ECO:0000256" key="2">
    <source>
        <dbReference type="SAM" id="MobiDB-lite"/>
    </source>
</evidence>
<evidence type="ECO:0000305" key="3"/>
<evidence type="ECO:0000312" key="4">
    <source>
        <dbReference type="MGI" id="MGI:1919618"/>
    </source>
</evidence>
<feature type="chain" id="PRO_0000269844" description="BLOC-1-related complex subunit 8">
    <location>
        <begin position="1"/>
        <end position="120"/>
    </location>
</feature>
<feature type="region of interest" description="Disordered" evidence="2">
    <location>
        <begin position="101"/>
        <end position="120"/>
    </location>
</feature>
<feature type="modified residue" description="Phosphoserine" evidence="1">
    <location>
        <position position="109"/>
    </location>
</feature>
<keyword id="KW-0458">Lysosome</keyword>
<keyword id="KW-0472">Membrane</keyword>
<keyword id="KW-0597">Phosphoprotein</keyword>
<keyword id="KW-1185">Reference proteome</keyword>
<gene>
    <name evidence="4" type="primary">Borcs8</name>
</gene>
<comment type="function">
    <text evidence="1">As part of the BLOC-one-related complex (BORC), it plays a role in the movement and localization of lysosomes at the cell periphery. Associated with the cytosolic face of lysosomes, BORC recruits ARL8B to the lysosomal membrane and couples lysosomes to microtubule plus-end-directed kinesin motors, driving lysosome movement toward the cell periphery.</text>
</comment>
<comment type="subunit">
    <text evidence="1">Component of the BLOC-one-related complex (BORC) which is composed of BLOC1S1, BLOC1S2, BORCS5, BORCS6, BORCS7, BORCS8, KXD1 and SNAPIN.</text>
</comment>
<comment type="subcellular location">
    <subcellularLocation>
        <location evidence="1">Lysosome membrane</location>
    </subcellularLocation>
</comment>
<comment type="similarity">
    <text evidence="3">Belongs to the BORCS8 family.</text>
</comment>
<organism>
    <name type="scientific">Mus musculus</name>
    <name type="common">Mouse</name>
    <dbReference type="NCBI Taxonomy" id="10090"/>
    <lineage>
        <taxon>Eukaryota</taxon>
        <taxon>Metazoa</taxon>
        <taxon>Chordata</taxon>
        <taxon>Craniata</taxon>
        <taxon>Vertebrata</taxon>
        <taxon>Euteleostomi</taxon>
        <taxon>Mammalia</taxon>
        <taxon>Eutheria</taxon>
        <taxon>Euarchontoglires</taxon>
        <taxon>Glires</taxon>
        <taxon>Rodentia</taxon>
        <taxon>Myomorpha</taxon>
        <taxon>Muroidea</taxon>
        <taxon>Muridae</taxon>
        <taxon>Murinae</taxon>
        <taxon>Mus</taxon>
        <taxon>Mus</taxon>
    </lineage>
</organism>